<protein>
    <recommendedName>
        <fullName evidence="1">Zinc import ATP-binding protein ZnuC</fullName>
        <ecNumber evidence="1">7.2.2.20</ecNumber>
    </recommendedName>
</protein>
<sequence>MSTLITLKNVAVNFGDRRVLNNISLHLQRGNILTLLGPNGAGKSTLVRVVLGLIEPSSGTIEQTDGLKIGYVPQKLHLDPTLPLTVKRFMMLKPGVKSGDILPALERVNAAHLLQQPMQKLSGGESQRVLLARALLNQPQLLVLDEPTQGVDVNGQLALYDLINQIRTELHCAVLMVSHDLHLVMAKTDEVLCLNQHICCSGTPEVVSTHPEFIAMFGHHGAEQLAIYRHQHDHHQHNHHHDLKGKIILENNRECHS</sequence>
<name>ZNUC_PHOLL</name>
<keyword id="KW-0067">ATP-binding</keyword>
<keyword id="KW-0997">Cell inner membrane</keyword>
<keyword id="KW-1003">Cell membrane</keyword>
<keyword id="KW-0406">Ion transport</keyword>
<keyword id="KW-0472">Membrane</keyword>
<keyword id="KW-0547">Nucleotide-binding</keyword>
<keyword id="KW-1185">Reference proteome</keyword>
<keyword id="KW-1278">Translocase</keyword>
<keyword id="KW-0813">Transport</keyword>
<keyword id="KW-0862">Zinc</keyword>
<keyword id="KW-0864">Zinc transport</keyword>
<feature type="chain" id="PRO_0000281523" description="Zinc import ATP-binding protein ZnuC">
    <location>
        <begin position="1"/>
        <end position="257"/>
    </location>
</feature>
<feature type="domain" description="ABC transporter" evidence="1">
    <location>
        <begin position="5"/>
        <end position="220"/>
    </location>
</feature>
<feature type="binding site" evidence="1">
    <location>
        <begin position="37"/>
        <end position="44"/>
    </location>
    <ligand>
        <name>ATP</name>
        <dbReference type="ChEBI" id="CHEBI:30616"/>
    </ligand>
</feature>
<comment type="function">
    <text evidence="1">Part of the ABC transporter complex ZnuABC involved in zinc import. Responsible for energy coupling to the transport system.</text>
</comment>
<comment type="catalytic activity">
    <reaction evidence="1">
        <text>Zn(2+)(out) + ATP(in) + H2O(in) = Zn(2+)(in) + ADP(in) + phosphate(in) + H(+)(in)</text>
        <dbReference type="Rhea" id="RHEA:29795"/>
        <dbReference type="ChEBI" id="CHEBI:15377"/>
        <dbReference type="ChEBI" id="CHEBI:15378"/>
        <dbReference type="ChEBI" id="CHEBI:29105"/>
        <dbReference type="ChEBI" id="CHEBI:30616"/>
        <dbReference type="ChEBI" id="CHEBI:43474"/>
        <dbReference type="ChEBI" id="CHEBI:456216"/>
        <dbReference type="EC" id="7.2.2.20"/>
    </reaction>
</comment>
<comment type="subunit">
    <text evidence="1">The complex is composed of two ATP-binding proteins (ZnuC), two transmembrane proteins (ZnuB) and a solute-binding protein (ZnuA).</text>
</comment>
<comment type="subcellular location">
    <subcellularLocation>
        <location evidence="1">Cell inner membrane</location>
        <topology evidence="1">Peripheral membrane protein</topology>
    </subcellularLocation>
</comment>
<comment type="similarity">
    <text evidence="1">Belongs to the ABC transporter superfamily. Zinc importer (TC 3.A.1.15.5) family.</text>
</comment>
<comment type="sequence caution" evidence="2">
    <conflict type="erroneous initiation">
        <sequence resource="EMBL-CDS" id="CAE14407"/>
    </conflict>
</comment>
<accession>Q7N545</accession>
<dbReference type="EC" id="7.2.2.20" evidence="1"/>
<dbReference type="EMBL" id="BX571866">
    <property type="protein sequence ID" value="CAE14407.1"/>
    <property type="status" value="ALT_INIT"/>
    <property type="molecule type" value="Genomic_DNA"/>
</dbReference>
<dbReference type="RefSeq" id="WP_011146368.1">
    <property type="nucleotide sequence ID" value="NC_005126.1"/>
</dbReference>
<dbReference type="SMR" id="Q7N545"/>
<dbReference type="STRING" id="243265.plu2114"/>
<dbReference type="GeneID" id="48848393"/>
<dbReference type="KEGG" id="plu:plu2114"/>
<dbReference type="eggNOG" id="COG1121">
    <property type="taxonomic scope" value="Bacteria"/>
</dbReference>
<dbReference type="HOGENOM" id="CLU_000604_1_11_6"/>
<dbReference type="OrthoDB" id="9780942at2"/>
<dbReference type="Proteomes" id="UP000002514">
    <property type="component" value="Chromosome"/>
</dbReference>
<dbReference type="GO" id="GO:0005886">
    <property type="term" value="C:plasma membrane"/>
    <property type="evidence" value="ECO:0007669"/>
    <property type="project" value="UniProtKB-SubCell"/>
</dbReference>
<dbReference type="GO" id="GO:0015633">
    <property type="term" value="F:ABC-type zinc transporter activity"/>
    <property type="evidence" value="ECO:0007669"/>
    <property type="project" value="UniProtKB-EC"/>
</dbReference>
<dbReference type="GO" id="GO:0005524">
    <property type="term" value="F:ATP binding"/>
    <property type="evidence" value="ECO:0007669"/>
    <property type="project" value="UniProtKB-KW"/>
</dbReference>
<dbReference type="GO" id="GO:0016887">
    <property type="term" value="F:ATP hydrolysis activity"/>
    <property type="evidence" value="ECO:0007669"/>
    <property type="project" value="InterPro"/>
</dbReference>
<dbReference type="GO" id="GO:0010043">
    <property type="term" value="P:response to zinc ion"/>
    <property type="evidence" value="ECO:0007669"/>
    <property type="project" value="TreeGrafter"/>
</dbReference>
<dbReference type="CDD" id="cd03235">
    <property type="entry name" value="ABC_Metallic_Cations"/>
    <property type="match status" value="1"/>
</dbReference>
<dbReference type="FunFam" id="3.40.50.300:FF:000392">
    <property type="entry name" value="Zinc import ATP-binding protein ZnuC"/>
    <property type="match status" value="1"/>
</dbReference>
<dbReference type="Gene3D" id="3.40.50.300">
    <property type="entry name" value="P-loop containing nucleotide triphosphate hydrolases"/>
    <property type="match status" value="1"/>
</dbReference>
<dbReference type="InterPro" id="IPR003593">
    <property type="entry name" value="AAA+_ATPase"/>
</dbReference>
<dbReference type="InterPro" id="IPR003439">
    <property type="entry name" value="ABC_transporter-like_ATP-bd"/>
</dbReference>
<dbReference type="InterPro" id="IPR017871">
    <property type="entry name" value="ABC_transporter-like_CS"/>
</dbReference>
<dbReference type="InterPro" id="IPR050153">
    <property type="entry name" value="Metal_Ion_Import_ABC"/>
</dbReference>
<dbReference type="InterPro" id="IPR027417">
    <property type="entry name" value="P-loop_NTPase"/>
</dbReference>
<dbReference type="NCBIfam" id="NF007090">
    <property type="entry name" value="PRK09544.1"/>
    <property type="match status" value="1"/>
</dbReference>
<dbReference type="PANTHER" id="PTHR42734">
    <property type="entry name" value="METAL TRANSPORT SYSTEM ATP-BINDING PROTEIN TM_0124-RELATED"/>
    <property type="match status" value="1"/>
</dbReference>
<dbReference type="PANTHER" id="PTHR42734:SF9">
    <property type="entry name" value="ZINC IMPORT ATP-BINDING PROTEIN ZNUC"/>
    <property type="match status" value="1"/>
</dbReference>
<dbReference type="Pfam" id="PF00005">
    <property type="entry name" value="ABC_tran"/>
    <property type="match status" value="1"/>
</dbReference>
<dbReference type="SMART" id="SM00382">
    <property type="entry name" value="AAA"/>
    <property type="match status" value="1"/>
</dbReference>
<dbReference type="SUPFAM" id="SSF52540">
    <property type="entry name" value="P-loop containing nucleoside triphosphate hydrolases"/>
    <property type="match status" value="1"/>
</dbReference>
<dbReference type="PROSITE" id="PS00211">
    <property type="entry name" value="ABC_TRANSPORTER_1"/>
    <property type="match status" value="1"/>
</dbReference>
<dbReference type="PROSITE" id="PS50893">
    <property type="entry name" value="ABC_TRANSPORTER_2"/>
    <property type="match status" value="1"/>
</dbReference>
<dbReference type="PROSITE" id="PS51298">
    <property type="entry name" value="ZNUC"/>
    <property type="match status" value="1"/>
</dbReference>
<gene>
    <name evidence="1" type="primary">znuC</name>
    <name type="ordered locus">plu2114</name>
</gene>
<organism>
    <name type="scientific">Photorhabdus laumondii subsp. laumondii (strain DSM 15139 / CIP 105565 / TT01)</name>
    <name type="common">Photorhabdus luminescens subsp. laumondii</name>
    <dbReference type="NCBI Taxonomy" id="243265"/>
    <lineage>
        <taxon>Bacteria</taxon>
        <taxon>Pseudomonadati</taxon>
        <taxon>Pseudomonadota</taxon>
        <taxon>Gammaproteobacteria</taxon>
        <taxon>Enterobacterales</taxon>
        <taxon>Morganellaceae</taxon>
        <taxon>Photorhabdus</taxon>
    </lineage>
</organism>
<reference key="1">
    <citation type="journal article" date="2003" name="Nat. Biotechnol.">
        <title>The genome sequence of the entomopathogenic bacterium Photorhabdus luminescens.</title>
        <authorList>
            <person name="Duchaud E."/>
            <person name="Rusniok C."/>
            <person name="Frangeul L."/>
            <person name="Buchrieser C."/>
            <person name="Givaudan A."/>
            <person name="Taourit S."/>
            <person name="Bocs S."/>
            <person name="Boursaux-Eude C."/>
            <person name="Chandler M."/>
            <person name="Charles J.-F."/>
            <person name="Dassa E."/>
            <person name="Derose R."/>
            <person name="Derzelle S."/>
            <person name="Freyssinet G."/>
            <person name="Gaudriault S."/>
            <person name="Medigue C."/>
            <person name="Lanois A."/>
            <person name="Powell K."/>
            <person name="Siguier P."/>
            <person name="Vincent R."/>
            <person name="Wingate V."/>
            <person name="Zouine M."/>
            <person name="Glaser P."/>
            <person name="Boemare N."/>
            <person name="Danchin A."/>
            <person name="Kunst F."/>
        </authorList>
    </citation>
    <scope>NUCLEOTIDE SEQUENCE [LARGE SCALE GENOMIC DNA]</scope>
    <source>
        <strain>DSM 15139 / CIP 105565 / TT01</strain>
    </source>
</reference>
<evidence type="ECO:0000255" key="1">
    <source>
        <dbReference type="HAMAP-Rule" id="MF_01725"/>
    </source>
</evidence>
<evidence type="ECO:0000305" key="2"/>
<proteinExistence type="inferred from homology"/>